<protein>
    <recommendedName>
        <fullName evidence="1 6">Na(+)-translocating NADH-quinone reductase subunit E</fullName>
        <shortName evidence="1">Na(+)-NQR subunit E</shortName>
        <shortName evidence="1">Na(+)-translocating NQR subunit E</shortName>
        <ecNumber evidence="1 3">7.2.1.1</ecNumber>
    </recommendedName>
    <alternativeName>
        <fullName evidence="1">NQR complex subunit E</fullName>
    </alternativeName>
    <alternativeName>
        <fullName evidence="1">NQR-1 subunit E</fullName>
    </alternativeName>
</protein>
<organism>
    <name type="scientific">Vibrio alginolyticus</name>
    <dbReference type="NCBI Taxonomy" id="663"/>
    <lineage>
        <taxon>Bacteria</taxon>
        <taxon>Pseudomonadati</taxon>
        <taxon>Pseudomonadota</taxon>
        <taxon>Gammaproteobacteria</taxon>
        <taxon>Vibrionales</taxon>
        <taxon>Vibrionaceae</taxon>
        <taxon>Vibrio</taxon>
    </lineage>
</organism>
<accession>Q56589</accession>
<accession>Q56583</accession>
<proteinExistence type="evidence at protein level"/>
<keyword id="KW-0997">Cell inner membrane</keyword>
<keyword id="KW-1003">Cell membrane</keyword>
<keyword id="KW-0903">Direct protein sequencing</keyword>
<keyword id="KW-0406">Ion transport</keyword>
<keyword id="KW-0472">Membrane</keyword>
<keyword id="KW-0520">NAD</keyword>
<keyword id="KW-0915">Sodium</keyword>
<keyword id="KW-0739">Sodium transport</keyword>
<keyword id="KW-1278">Translocase</keyword>
<keyword id="KW-0812">Transmembrane</keyword>
<keyword id="KW-1133">Transmembrane helix</keyword>
<keyword id="KW-0813">Transport</keyword>
<keyword id="KW-0830">Ubiquinone</keyword>
<dbReference type="EC" id="7.2.1.1" evidence="1 3"/>
<dbReference type="EMBL" id="AB008030">
    <property type="protein sequence ID" value="BAA22914.1"/>
    <property type="molecule type" value="Genomic_DNA"/>
</dbReference>
<dbReference type="EMBL" id="Z37111">
    <property type="protein sequence ID" value="CAA85480.1"/>
    <property type="molecule type" value="Genomic_DNA"/>
</dbReference>
<dbReference type="PIR" id="S65530">
    <property type="entry name" value="S65530"/>
</dbReference>
<dbReference type="RefSeq" id="WP_005380270.1">
    <property type="nucleotide sequence ID" value="NZ_WAHT01000008.1"/>
</dbReference>
<dbReference type="SMR" id="Q56589"/>
<dbReference type="STRING" id="663.BAU10_10820"/>
<dbReference type="TCDB" id="3.D.5.1.1">
    <property type="family name" value="the na(+)-translocating nadh:quinone dehydrogenase (na-ndh or nqr) family"/>
</dbReference>
<dbReference type="GeneID" id="75166843"/>
<dbReference type="eggNOG" id="COG2209">
    <property type="taxonomic scope" value="Bacteria"/>
</dbReference>
<dbReference type="OrthoDB" id="9803631at2"/>
<dbReference type="GO" id="GO:0009276">
    <property type="term" value="C:Gram-negative-bacterium-type cell wall"/>
    <property type="evidence" value="ECO:0007669"/>
    <property type="project" value="InterPro"/>
</dbReference>
<dbReference type="GO" id="GO:0005886">
    <property type="term" value="C:plasma membrane"/>
    <property type="evidence" value="ECO:0007669"/>
    <property type="project" value="UniProtKB-SubCell"/>
</dbReference>
<dbReference type="GO" id="GO:0016655">
    <property type="term" value="F:oxidoreductase activity, acting on NAD(P)H, quinone or similar compound as acceptor"/>
    <property type="evidence" value="ECO:0000314"/>
    <property type="project" value="UniProtKB"/>
</dbReference>
<dbReference type="GO" id="GO:0022904">
    <property type="term" value="P:respiratory electron transport chain"/>
    <property type="evidence" value="ECO:0007669"/>
    <property type="project" value="InterPro"/>
</dbReference>
<dbReference type="GO" id="GO:0006814">
    <property type="term" value="P:sodium ion transport"/>
    <property type="evidence" value="ECO:0007669"/>
    <property type="project" value="UniProtKB-UniRule"/>
</dbReference>
<dbReference type="HAMAP" id="MF_00429">
    <property type="entry name" value="NqrE"/>
    <property type="match status" value="1"/>
</dbReference>
<dbReference type="InterPro" id="IPR003667">
    <property type="entry name" value="NqrDE/RnfAE"/>
</dbReference>
<dbReference type="InterPro" id="IPR050133">
    <property type="entry name" value="NqrDE/RnfAE_oxidrdctase"/>
</dbReference>
<dbReference type="InterPro" id="IPR010967">
    <property type="entry name" value="NqrE"/>
</dbReference>
<dbReference type="NCBIfam" id="TIGR01940">
    <property type="entry name" value="nqrE"/>
    <property type="match status" value="1"/>
</dbReference>
<dbReference type="PANTHER" id="PTHR30335">
    <property type="entry name" value="INTEGRAL MEMBRANE PROTEIN OF SOXR-REDUCING COMPLEX"/>
    <property type="match status" value="1"/>
</dbReference>
<dbReference type="PANTHER" id="PTHR30335:SF1">
    <property type="entry name" value="NA(+)-TRANSLOCATING NADH-QUINONE REDUCTASE SUBUNIT E"/>
    <property type="match status" value="1"/>
</dbReference>
<dbReference type="Pfam" id="PF02508">
    <property type="entry name" value="Rnf-Nqr"/>
    <property type="match status" value="1"/>
</dbReference>
<dbReference type="PIRSF" id="PIRSF006102">
    <property type="entry name" value="NQR_DE"/>
    <property type="match status" value="1"/>
</dbReference>
<sequence>MEHYISLLVKSIFIENMALSFFLGMCTFLAVSKKVKTSFGLGVAVVVVLTIAVPVNNLVYNLVLRENALVEGVDLSFLNFITFIGVIAALVQILEMVLDRFFPPLYNALGIFLPLITVNCAIFGGVSFMVQRDYNFAESIVYGFGSGVGWMLAIVALAGIREKMKYSDVPPGLRGLGITFITVGLMALGFMSFSGVQL</sequence>
<reference key="1">
    <citation type="journal article" date="1995" name="FEBS Lett.">
        <title>Sequencing and the alignment of structural genes in the nqr operon encoding the Na(+)-translocating NADH-quinone reductase from Vibrio alginolyticus.</title>
        <authorList>
            <person name="Hayashi M."/>
            <person name="Hirai K."/>
            <person name="Unemoto T."/>
        </authorList>
    </citation>
    <scope>NUCLEOTIDE SEQUENCE [GENOMIC DNA]</scope>
</reference>
<reference key="2">
    <citation type="journal article" date="1994" name="FEBS Lett.">
        <title>Cloning and sequencing of four structural genes for the Na(+)-translocating NADH-ubiquinone oxidoreductase of Vibrio alginolyticus.</title>
        <authorList>
            <person name="Beattie P."/>
            <person name="Tan K."/>
            <person name="Bourne R.M."/>
            <person name="Leach D.R.F."/>
            <person name="Rich P.R."/>
            <person name="Ward F.B."/>
        </authorList>
    </citation>
    <scope>NUCLEOTIDE SEQUENCE [GENOMIC DNA] OF 1-94</scope>
    <source>
        <strain>NCIMB 11038 / LMG 3418</strain>
    </source>
</reference>
<reference key="3">
    <citation type="journal article" date="1998" name="FEBS Lett.">
        <title>Identification of six subunits constituting Na+-translocating NADH-quinone reductase from the marine Vibrio alginolyticus.</title>
        <authorList>
            <person name="Nakayama Y."/>
            <person name="Hayashi M."/>
            <person name="Unemoto T."/>
        </authorList>
    </citation>
    <scope>PROTEIN SEQUENCE OF 1-8</scope>
    <scope>CATALYTIC ACTIVITY</scope>
    <scope>SUBUNIT</scope>
</reference>
<reference key="4">
    <citation type="journal article" date="1999" name="Biol. Pharm. Bull.">
        <title>Inhibitor studies of a new antibiotic, korormicin, 2-n-heptyl-4-hydroxyquinoline N-oxide and Ag+ toward the Na+-translocating NADH-quinone reductase from the marine Vibrio alginolyticus.</title>
        <authorList>
            <person name="Nakayama Y."/>
            <person name="Hayashi M."/>
            <person name="Yoshikawa K."/>
            <person name="Mochida K."/>
            <person name="Unemoto T."/>
        </authorList>
    </citation>
    <scope>INHIBITION OF ENZYMATIC ACTIVITY</scope>
</reference>
<reference key="5">
    <citation type="journal article" date="2001" name="Biochim. Biophys. Acta">
        <title>Recent progress in the Na(+)-translocating NADH-quinone reductase from the marine Vibrio alginolyticus.</title>
        <authorList>
            <person name="Hayashi M."/>
            <person name="Nakayama Y."/>
            <person name="Unemoto T."/>
        </authorList>
    </citation>
    <scope>REVIEW</scope>
</reference>
<reference key="6">
    <citation type="journal article" date="2001" name="Biochim. Biophys. Acta">
        <title>Na(+) translocation by bacterial NADH:quinone oxidoreductases: an extension to the complex-I family of primary redox pumps.</title>
        <authorList>
            <person name="Steuber J."/>
        </authorList>
    </citation>
    <scope>REVIEW</scope>
</reference>
<comment type="function">
    <text evidence="1 8 9">NQR complex catalyzes the reduction of ubiquinone-1 to ubiquinol by two successive reactions, coupled with the transport of Na(+) ions from the cytoplasm to the periplasm. NqrA to NqrE are probably involved in the second step, the conversion of ubisemiquinone to ubiquinol.</text>
</comment>
<comment type="catalytic activity">
    <reaction evidence="1 3">
        <text>a ubiquinone + n Na(+)(in) + NADH + H(+) = a ubiquinol + n Na(+)(out) + NAD(+)</text>
        <dbReference type="Rhea" id="RHEA:47748"/>
        <dbReference type="Rhea" id="RHEA-COMP:9565"/>
        <dbReference type="Rhea" id="RHEA-COMP:9566"/>
        <dbReference type="ChEBI" id="CHEBI:15378"/>
        <dbReference type="ChEBI" id="CHEBI:16389"/>
        <dbReference type="ChEBI" id="CHEBI:17976"/>
        <dbReference type="ChEBI" id="CHEBI:29101"/>
        <dbReference type="ChEBI" id="CHEBI:57540"/>
        <dbReference type="ChEBI" id="CHEBI:57945"/>
        <dbReference type="EC" id="7.2.1.1"/>
    </reaction>
</comment>
<comment type="activity regulation">
    <text evidence="2">This reaction is tightly coupled to the Na(+) pumping activity and specifically requires Na(+) for activity. Inhibited by korormicin and 2-N-heptyl-4-hydroxyquinoline N-oxide (HQNO).</text>
</comment>
<comment type="subunit">
    <text evidence="1 3">Composed of six subunits; NqrA, NqrB, NqrC, NqrD, NqrE and NqrF.</text>
</comment>
<comment type="subcellular location">
    <subcellularLocation>
        <location evidence="1 7">Cell inner membrane</location>
        <topology evidence="1">Multi-pass membrane protein</topology>
    </subcellularLocation>
</comment>
<comment type="PTM">
    <text evidence="3">The N-terminus is blocked.</text>
</comment>
<comment type="similarity">
    <text evidence="1 7">Belongs to the NqrDE/RnfAE family.</text>
</comment>
<name>NQRE_VIBAL</name>
<evidence type="ECO:0000255" key="1">
    <source>
        <dbReference type="HAMAP-Rule" id="MF_00429"/>
    </source>
</evidence>
<evidence type="ECO:0000269" key="2">
    <source>
    </source>
</evidence>
<evidence type="ECO:0000269" key="3">
    <source>
    </source>
</evidence>
<evidence type="ECO:0000303" key="4">
    <source>
    </source>
</evidence>
<evidence type="ECO:0000303" key="5">
    <source>
    </source>
</evidence>
<evidence type="ECO:0000303" key="6">
    <source>
    </source>
</evidence>
<evidence type="ECO:0000305" key="7"/>
<evidence type="ECO:0000305" key="8">
    <source>
    </source>
</evidence>
<evidence type="ECO:0000305" key="9">
    <source>
    </source>
</evidence>
<feature type="chain" id="PRO_0000214257" description="Na(+)-translocating NADH-quinone reductase subunit E">
    <location>
        <begin position="1"/>
        <end position="198"/>
    </location>
</feature>
<feature type="transmembrane region" description="Helical" evidence="1">
    <location>
        <begin position="11"/>
        <end position="31"/>
    </location>
</feature>
<feature type="transmembrane region" description="Helical" evidence="1">
    <location>
        <begin position="39"/>
        <end position="59"/>
    </location>
</feature>
<feature type="transmembrane region" description="Helical" evidence="1">
    <location>
        <begin position="77"/>
        <end position="97"/>
    </location>
</feature>
<feature type="transmembrane region" description="Helical" evidence="1">
    <location>
        <begin position="110"/>
        <end position="130"/>
    </location>
</feature>
<feature type="transmembrane region" description="Helical" evidence="1">
    <location>
        <begin position="140"/>
        <end position="160"/>
    </location>
</feature>
<feature type="transmembrane region" description="Helical" evidence="1">
    <location>
        <begin position="176"/>
        <end position="196"/>
    </location>
</feature>
<feature type="sequence conflict" description="In Ref. 2; CAA85480." evidence="7" ref="2">
    <original>FIENM</original>
    <variation>SSKH</variation>
    <location>
        <begin position="13"/>
        <end position="17"/>
    </location>
</feature>
<gene>
    <name evidence="1 5" type="primary">nqrE</name>
    <name evidence="4" type="synonym">nqr5</name>
</gene>